<comment type="function">
    <text evidence="1">Essential for the assembly of the photosystem I (PSI) complex. May act as a chaperone-like factor to guide the assembly of the PSI subunits.</text>
</comment>
<comment type="subcellular location">
    <subcellularLocation>
        <location evidence="1">Cellular thylakoid membrane</location>
        <topology evidence="1">Peripheral membrane protein</topology>
    </subcellularLocation>
</comment>
<comment type="similarity">
    <text evidence="1">Belongs to the Ycf3 family.</text>
</comment>
<feature type="chain" id="PRO_1000200320" description="Photosystem I assembly protein Ycf3">
    <location>
        <begin position="1"/>
        <end position="173"/>
    </location>
</feature>
<feature type="repeat" description="TPR 1">
    <location>
        <begin position="35"/>
        <end position="68"/>
    </location>
</feature>
<feature type="repeat" description="TPR 2">
    <location>
        <begin position="72"/>
        <end position="105"/>
    </location>
</feature>
<feature type="repeat" description="TPR 3">
    <location>
        <begin position="120"/>
        <end position="153"/>
    </location>
</feature>
<evidence type="ECO:0000255" key="1">
    <source>
        <dbReference type="HAMAP-Rule" id="MF_00439"/>
    </source>
</evidence>
<name>YCF3_GLOC7</name>
<gene>
    <name evidence="1" type="primary">ycf3</name>
    <name type="ordered locus">PCC7424_3996</name>
</gene>
<reference key="1">
    <citation type="journal article" date="2011" name="MBio">
        <title>Novel metabolic attributes of the genus Cyanothece, comprising a group of unicellular nitrogen-fixing Cyanobacteria.</title>
        <authorList>
            <person name="Bandyopadhyay A."/>
            <person name="Elvitigala T."/>
            <person name="Welsh E."/>
            <person name="Stockel J."/>
            <person name="Liberton M."/>
            <person name="Min H."/>
            <person name="Sherman L.A."/>
            <person name="Pakrasi H.B."/>
        </authorList>
    </citation>
    <scope>NUCLEOTIDE SEQUENCE [LARGE SCALE GENOMIC DNA]</scope>
    <source>
        <strain>PCC 7424</strain>
    </source>
</reference>
<dbReference type="EMBL" id="CP001291">
    <property type="protein sequence ID" value="ACK72370.1"/>
    <property type="molecule type" value="Genomic_DNA"/>
</dbReference>
<dbReference type="RefSeq" id="WP_015955955.1">
    <property type="nucleotide sequence ID" value="NC_011729.1"/>
</dbReference>
<dbReference type="SMR" id="B7KKZ8"/>
<dbReference type="STRING" id="65393.PCC7424_3996"/>
<dbReference type="KEGG" id="cyc:PCC7424_3996"/>
<dbReference type="eggNOG" id="COG0457">
    <property type="taxonomic scope" value="Bacteria"/>
</dbReference>
<dbReference type="HOGENOM" id="CLU_141248_0_0_3"/>
<dbReference type="OrthoDB" id="9429505at2"/>
<dbReference type="Proteomes" id="UP000002384">
    <property type="component" value="Chromosome"/>
</dbReference>
<dbReference type="GO" id="GO:0031676">
    <property type="term" value="C:plasma membrane-derived thylakoid membrane"/>
    <property type="evidence" value="ECO:0007669"/>
    <property type="project" value="UniProtKB-SubCell"/>
</dbReference>
<dbReference type="GO" id="GO:0015979">
    <property type="term" value="P:photosynthesis"/>
    <property type="evidence" value="ECO:0007669"/>
    <property type="project" value="UniProtKB-UniRule"/>
</dbReference>
<dbReference type="Gene3D" id="1.25.40.10">
    <property type="entry name" value="Tetratricopeptide repeat domain"/>
    <property type="match status" value="1"/>
</dbReference>
<dbReference type="HAMAP" id="MF_00439">
    <property type="entry name" value="Ycf3"/>
    <property type="match status" value="1"/>
</dbReference>
<dbReference type="InterPro" id="IPR022818">
    <property type="entry name" value="PSI_Ycf3_assembly"/>
</dbReference>
<dbReference type="InterPro" id="IPR011990">
    <property type="entry name" value="TPR-like_helical_dom_sf"/>
</dbReference>
<dbReference type="InterPro" id="IPR019734">
    <property type="entry name" value="TPR_rpt"/>
</dbReference>
<dbReference type="InterPro" id="IPR051685">
    <property type="entry name" value="Ycf3/AcsC/BcsC/TPR_MFPF"/>
</dbReference>
<dbReference type="NCBIfam" id="NF002725">
    <property type="entry name" value="PRK02603.1"/>
    <property type="match status" value="1"/>
</dbReference>
<dbReference type="PANTHER" id="PTHR44943">
    <property type="entry name" value="CELLULOSE SYNTHASE OPERON PROTEIN C"/>
    <property type="match status" value="1"/>
</dbReference>
<dbReference type="PANTHER" id="PTHR44943:SF8">
    <property type="entry name" value="TPR REPEAT-CONTAINING PROTEIN MJ0263"/>
    <property type="match status" value="1"/>
</dbReference>
<dbReference type="Pfam" id="PF00515">
    <property type="entry name" value="TPR_1"/>
    <property type="match status" value="1"/>
</dbReference>
<dbReference type="SMART" id="SM00028">
    <property type="entry name" value="TPR"/>
    <property type="match status" value="3"/>
</dbReference>
<dbReference type="SUPFAM" id="SSF48452">
    <property type="entry name" value="TPR-like"/>
    <property type="match status" value="1"/>
</dbReference>
<dbReference type="PROSITE" id="PS50005">
    <property type="entry name" value="TPR"/>
    <property type="match status" value="3"/>
</dbReference>
<dbReference type="PROSITE" id="PS50293">
    <property type="entry name" value="TPR_REGION"/>
    <property type="match status" value="1"/>
</dbReference>
<sequence>MPRTQRNDNFIDKTFTVMADIILKVVPFNKKAKEAFVYYRDGMSAQADGEYKEALDNYYEALKLEDDANDRSYILYNIGIIHGSNGEHERALEYYHEAIELNPNLPSALNNIAVIYHYQGERAKEEGREDESEALFDKAAEYWKQAIRLAPNNYIEAQNWLKVTGRSEMDVFF</sequence>
<protein>
    <recommendedName>
        <fullName evidence="1">Photosystem I assembly protein Ycf3</fullName>
    </recommendedName>
</protein>
<keyword id="KW-0472">Membrane</keyword>
<keyword id="KW-0602">Photosynthesis</keyword>
<keyword id="KW-1185">Reference proteome</keyword>
<keyword id="KW-0677">Repeat</keyword>
<keyword id="KW-0793">Thylakoid</keyword>
<keyword id="KW-0802">TPR repeat</keyword>
<proteinExistence type="inferred from homology"/>
<accession>B7KKZ8</accession>
<organism>
    <name type="scientific">Gloeothece citriformis (strain PCC 7424)</name>
    <name type="common">Cyanothece sp. (strain PCC 7424)</name>
    <dbReference type="NCBI Taxonomy" id="65393"/>
    <lineage>
        <taxon>Bacteria</taxon>
        <taxon>Bacillati</taxon>
        <taxon>Cyanobacteriota</taxon>
        <taxon>Cyanophyceae</taxon>
        <taxon>Oscillatoriophycideae</taxon>
        <taxon>Chroococcales</taxon>
        <taxon>Aphanothecaceae</taxon>
        <taxon>Gloeothece</taxon>
        <taxon>Gloeothece citriformis</taxon>
    </lineage>
</organism>